<dbReference type="EMBL" id="CP000255">
    <property type="protein sequence ID" value="ABD21016.1"/>
    <property type="molecule type" value="Genomic_DNA"/>
</dbReference>
<dbReference type="RefSeq" id="WP_000344352.1">
    <property type="nucleotide sequence ID" value="NZ_CP027476.1"/>
</dbReference>
<dbReference type="SMR" id="Q2FEJ9"/>
<dbReference type="KEGG" id="saa:SAUSA300_2244"/>
<dbReference type="HOGENOM" id="CLU_056339_5_0_9"/>
<dbReference type="OMA" id="CQHIIVH"/>
<dbReference type="Proteomes" id="UP000001939">
    <property type="component" value="Chromosome"/>
</dbReference>
<dbReference type="GO" id="GO:0005737">
    <property type="term" value="C:cytoplasm"/>
    <property type="evidence" value="ECO:0007669"/>
    <property type="project" value="UniProtKB-SubCell"/>
</dbReference>
<dbReference type="GO" id="GO:0016151">
    <property type="term" value="F:nickel cation binding"/>
    <property type="evidence" value="ECO:0007669"/>
    <property type="project" value="UniProtKB-UniRule"/>
</dbReference>
<dbReference type="HAMAP" id="MF_01384">
    <property type="entry name" value="UreD"/>
    <property type="match status" value="1"/>
</dbReference>
<dbReference type="InterPro" id="IPR002669">
    <property type="entry name" value="UreD"/>
</dbReference>
<dbReference type="PANTHER" id="PTHR33643">
    <property type="entry name" value="UREASE ACCESSORY PROTEIN D"/>
    <property type="match status" value="1"/>
</dbReference>
<dbReference type="PANTHER" id="PTHR33643:SF1">
    <property type="entry name" value="UREASE ACCESSORY PROTEIN D"/>
    <property type="match status" value="1"/>
</dbReference>
<dbReference type="Pfam" id="PF01774">
    <property type="entry name" value="UreD"/>
    <property type="match status" value="1"/>
</dbReference>
<comment type="function">
    <text evidence="1">Required for maturation of urease via the functional incorporation of the urease nickel metallocenter.</text>
</comment>
<comment type="subunit">
    <text evidence="1">UreD, UreF and UreG form a complex that acts as a GTP-hydrolysis-dependent molecular chaperone, activating the urease apoprotein by helping to assemble the nickel containing metallocenter of UreC. The UreE protein probably delivers the nickel.</text>
</comment>
<comment type="subcellular location">
    <subcellularLocation>
        <location evidence="1">Cytoplasm</location>
    </subcellularLocation>
</comment>
<comment type="similarity">
    <text evidence="1">Belongs to the UreD family.</text>
</comment>
<sequence>MDEQQWTGQLDLTVFFDGNRSVSRDIFFEKALKVIRPVYLNQSTIPTFYIVNVGGGYLDGDRYRMNVNVEDNAKVTLTSQGATKIYKTPSNHVEQYQTFNLKDNAYLEYVADPIIAYENAKFYQHNTFNLNNSSSLFYTDILTPGYSKTGEAFKYQYMHLINEIYIEDELVTYDNLLLNPNKQSINEIGYMEHYSHYGSAYFIHEDVNQKLIDSVYETISSYSNTFDCRVAISQLPTHGFAVRIFAYRTQIIEKILGTIQSYIAENIYDRKLDFLRKY</sequence>
<gene>
    <name evidence="1" type="primary">ureD</name>
    <name type="ordered locus">SAUSA300_2244</name>
</gene>
<feature type="chain" id="PRO_0000346603" description="Urease accessory protein UreD">
    <location>
        <begin position="1"/>
        <end position="278"/>
    </location>
</feature>
<proteinExistence type="inferred from homology"/>
<accession>Q2FEJ9</accession>
<evidence type="ECO:0000255" key="1">
    <source>
        <dbReference type="HAMAP-Rule" id="MF_01384"/>
    </source>
</evidence>
<protein>
    <recommendedName>
        <fullName evidence="1">Urease accessory protein UreD</fullName>
    </recommendedName>
</protein>
<name>URED_STAA3</name>
<organism>
    <name type="scientific">Staphylococcus aureus (strain USA300)</name>
    <dbReference type="NCBI Taxonomy" id="367830"/>
    <lineage>
        <taxon>Bacteria</taxon>
        <taxon>Bacillati</taxon>
        <taxon>Bacillota</taxon>
        <taxon>Bacilli</taxon>
        <taxon>Bacillales</taxon>
        <taxon>Staphylococcaceae</taxon>
        <taxon>Staphylococcus</taxon>
    </lineage>
</organism>
<reference key="1">
    <citation type="journal article" date="2006" name="Lancet">
        <title>Complete genome sequence of USA300, an epidemic clone of community-acquired meticillin-resistant Staphylococcus aureus.</title>
        <authorList>
            <person name="Diep B.A."/>
            <person name="Gill S.R."/>
            <person name="Chang R.F."/>
            <person name="Phan T.H."/>
            <person name="Chen J.H."/>
            <person name="Davidson M.G."/>
            <person name="Lin F."/>
            <person name="Lin J."/>
            <person name="Carleton H.A."/>
            <person name="Mongodin E.F."/>
            <person name="Sensabaugh G.F."/>
            <person name="Perdreau-Remington F."/>
        </authorList>
    </citation>
    <scope>NUCLEOTIDE SEQUENCE [LARGE SCALE GENOMIC DNA]</scope>
    <source>
        <strain>USA300</strain>
    </source>
</reference>
<keyword id="KW-0143">Chaperone</keyword>
<keyword id="KW-0963">Cytoplasm</keyword>
<keyword id="KW-0996">Nickel insertion</keyword>